<feature type="chain" id="PRO_0000098990" description="Tryptophan synthase beta chain">
    <location>
        <begin position="1"/>
        <end position="406"/>
    </location>
</feature>
<feature type="modified residue" description="N6-(pyridoxal phosphate)lysine" evidence="1">
    <location>
        <position position="99"/>
    </location>
</feature>
<comment type="function">
    <text evidence="1">The beta subunit is responsible for the synthesis of L-tryptophan from indole and L-serine.</text>
</comment>
<comment type="catalytic activity">
    <reaction evidence="1">
        <text>(1S,2R)-1-C-(indol-3-yl)glycerol 3-phosphate + L-serine = D-glyceraldehyde 3-phosphate + L-tryptophan + H2O</text>
        <dbReference type="Rhea" id="RHEA:10532"/>
        <dbReference type="ChEBI" id="CHEBI:15377"/>
        <dbReference type="ChEBI" id="CHEBI:33384"/>
        <dbReference type="ChEBI" id="CHEBI:57912"/>
        <dbReference type="ChEBI" id="CHEBI:58866"/>
        <dbReference type="ChEBI" id="CHEBI:59776"/>
        <dbReference type="EC" id="4.2.1.20"/>
    </reaction>
</comment>
<comment type="cofactor">
    <cofactor evidence="1">
        <name>pyridoxal 5'-phosphate</name>
        <dbReference type="ChEBI" id="CHEBI:597326"/>
    </cofactor>
</comment>
<comment type="pathway">
    <text evidence="1">Amino-acid biosynthesis; L-tryptophan biosynthesis; L-tryptophan from chorismate: step 5/5.</text>
</comment>
<comment type="subunit">
    <text evidence="1">Tetramer of two alpha and two beta chains.</text>
</comment>
<comment type="similarity">
    <text evidence="1">Belongs to the TrpB family.</text>
</comment>
<name>TRPB_RHIME</name>
<reference key="1">
    <citation type="journal article" date="2001" name="Proc. Natl. Acad. Sci. U.S.A.">
        <title>Analysis of the chromosome sequence of the legume symbiont Sinorhizobium meliloti strain 1021.</title>
        <authorList>
            <person name="Capela D."/>
            <person name="Barloy-Hubler F."/>
            <person name="Gouzy J."/>
            <person name="Bothe G."/>
            <person name="Ampe F."/>
            <person name="Batut J."/>
            <person name="Boistard P."/>
            <person name="Becker A."/>
            <person name="Boutry M."/>
            <person name="Cadieu E."/>
            <person name="Dreano S."/>
            <person name="Gloux S."/>
            <person name="Godrie T."/>
            <person name="Goffeau A."/>
            <person name="Kahn D."/>
            <person name="Kiss E."/>
            <person name="Lelaure V."/>
            <person name="Masuy D."/>
            <person name="Pohl T."/>
            <person name="Portetelle D."/>
            <person name="Puehler A."/>
            <person name="Purnelle B."/>
            <person name="Ramsperger U."/>
            <person name="Renard C."/>
            <person name="Thebault P."/>
            <person name="Vandenbol M."/>
            <person name="Weidner S."/>
            <person name="Galibert F."/>
        </authorList>
    </citation>
    <scope>NUCLEOTIDE SEQUENCE [LARGE SCALE GENOMIC DNA]</scope>
    <source>
        <strain>1021</strain>
    </source>
</reference>
<reference key="2">
    <citation type="journal article" date="2001" name="Science">
        <title>The composite genome of the legume symbiont Sinorhizobium meliloti.</title>
        <authorList>
            <person name="Galibert F."/>
            <person name="Finan T.M."/>
            <person name="Long S.R."/>
            <person name="Puehler A."/>
            <person name="Abola P."/>
            <person name="Ampe F."/>
            <person name="Barloy-Hubler F."/>
            <person name="Barnett M.J."/>
            <person name="Becker A."/>
            <person name="Boistard P."/>
            <person name="Bothe G."/>
            <person name="Boutry M."/>
            <person name="Bowser L."/>
            <person name="Buhrmester J."/>
            <person name="Cadieu E."/>
            <person name="Capela D."/>
            <person name="Chain P."/>
            <person name="Cowie A."/>
            <person name="Davis R.W."/>
            <person name="Dreano S."/>
            <person name="Federspiel N.A."/>
            <person name="Fisher R.F."/>
            <person name="Gloux S."/>
            <person name="Godrie T."/>
            <person name="Goffeau A."/>
            <person name="Golding B."/>
            <person name="Gouzy J."/>
            <person name="Gurjal M."/>
            <person name="Hernandez-Lucas I."/>
            <person name="Hong A."/>
            <person name="Huizar L."/>
            <person name="Hyman R.W."/>
            <person name="Jones T."/>
            <person name="Kahn D."/>
            <person name="Kahn M.L."/>
            <person name="Kalman S."/>
            <person name="Keating D.H."/>
            <person name="Kiss E."/>
            <person name="Komp C."/>
            <person name="Lelaure V."/>
            <person name="Masuy D."/>
            <person name="Palm C."/>
            <person name="Peck M.C."/>
            <person name="Pohl T.M."/>
            <person name="Portetelle D."/>
            <person name="Purnelle B."/>
            <person name="Ramsperger U."/>
            <person name="Surzycki R."/>
            <person name="Thebault P."/>
            <person name="Vandenbol M."/>
            <person name="Vorhoelter F.J."/>
            <person name="Weidner S."/>
            <person name="Wells D.H."/>
            <person name="Wong K."/>
            <person name="Yeh K.-C."/>
            <person name="Batut J."/>
        </authorList>
    </citation>
    <scope>NUCLEOTIDE SEQUENCE [LARGE SCALE GENOMIC DNA]</scope>
    <source>
        <strain>1021</strain>
    </source>
</reference>
<protein>
    <recommendedName>
        <fullName evidence="1">Tryptophan synthase beta chain</fullName>
        <ecNumber evidence="1">4.2.1.20</ecNumber>
    </recommendedName>
</protein>
<dbReference type="EC" id="4.2.1.20" evidence="1"/>
<dbReference type="EMBL" id="AL591688">
    <property type="protein sequence ID" value="CAC41415.1"/>
    <property type="molecule type" value="Genomic_DNA"/>
</dbReference>
<dbReference type="RefSeq" id="NP_384134.1">
    <property type="nucleotide sequence ID" value="NC_003047.1"/>
</dbReference>
<dbReference type="RefSeq" id="WP_003536446.1">
    <property type="nucleotide sequence ID" value="NC_003047.1"/>
</dbReference>
<dbReference type="SMR" id="Q92TC9"/>
<dbReference type="EnsemblBacteria" id="CAC41415">
    <property type="protein sequence ID" value="CAC41415"/>
    <property type="gene ID" value="SMc02766"/>
</dbReference>
<dbReference type="GeneID" id="89574344"/>
<dbReference type="KEGG" id="sme:SMc02766"/>
<dbReference type="PATRIC" id="fig|266834.11.peg.1381"/>
<dbReference type="eggNOG" id="COG0133">
    <property type="taxonomic scope" value="Bacteria"/>
</dbReference>
<dbReference type="HOGENOM" id="CLU_016734_3_1_5"/>
<dbReference type="OrthoDB" id="9766131at2"/>
<dbReference type="UniPathway" id="UPA00035">
    <property type="reaction ID" value="UER00044"/>
</dbReference>
<dbReference type="Proteomes" id="UP000001976">
    <property type="component" value="Chromosome"/>
</dbReference>
<dbReference type="GO" id="GO:0005737">
    <property type="term" value="C:cytoplasm"/>
    <property type="evidence" value="ECO:0007669"/>
    <property type="project" value="TreeGrafter"/>
</dbReference>
<dbReference type="GO" id="GO:0004834">
    <property type="term" value="F:tryptophan synthase activity"/>
    <property type="evidence" value="ECO:0007669"/>
    <property type="project" value="UniProtKB-UniRule"/>
</dbReference>
<dbReference type="CDD" id="cd06446">
    <property type="entry name" value="Trp-synth_B"/>
    <property type="match status" value="1"/>
</dbReference>
<dbReference type="FunFam" id="3.40.50.1100:FF:000001">
    <property type="entry name" value="Tryptophan synthase beta chain"/>
    <property type="match status" value="1"/>
</dbReference>
<dbReference type="FunFam" id="3.40.50.1100:FF:000004">
    <property type="entry name" value="Tryptophan synthase beta chain"/>
    <property type="match status" value="1"/>
</dbReference>
<dbReference type="Gene3D" id="3.40.50.1100">
    <property type="match status" value="2"/>
</dbReference>
<dbReference type="HAMAP" id="MF_00133">
    <property type="entry name" value="Trp_synth_beta"/>
    <property type="match status" value="1"/>
</dbReference>
<dbReference type="InterPro" id="IPR006653">
    <property type="entry name" value="Trp_synth_b_CS"/>
</dbReference>
<dbReference type="InterPro" id="IPR006654">
    <property type="entry name" value="Trp_synth_beta"/>
</dbReference>
<dbReference type="InterPro" id="IPR023026">
    <property type="entry name" value="Trp_synth_beta/beta-like"/>
</dbReference>
<dbReference type="InterPro" id="IPR001926">
    <property type="entry name" value="TrpB-like_PALP"/>
</dbReference>
<dbReference type="InterPro" id="IPR036052">
    <property type="entry name" value="TrpB-like_PALP_sf"/>
</dbReference>
<dbReference type="NCBIfam" id="TIGR00263">
    <property type="entry name" value="trpB"/>
    <property type="match status" value="1"/>
</dbReference>
<dbReference type="PANTHER" id="PTHR48077:SF3">
    <property type="entry name" value="TRYPTOPHAN SYNTHASE"/>
    <property type="match status" value="1"/>
</dbReference>
<dbReference type="PANTHER" id="PTHR48077">
    <property type="entry name" value="TRYPTOPHAN SYNTHASE-RELATED"/>
    <property type="match status" value="1"/>
</dbReference>
<dbReference type="Pfam" id="PF00291">
    <property type="entry name" value="PALP"/>
    <property type="match status" value="1"/>
</dbReference>
<dbReference type="PIRSF" id="PIRSF001413">
    <property type="entry name" value="Trp_syn_beta"/>
    <property type="match status" value="1"/>
</dbReference>
<dbReference type="SUPFAM" id="SSF53686">
    <property type="entry name" value="Tryptophan synthase beta subunit-like PLP-dependent enzymes"/>
    <property type="match status" value="1"/>
</dbReference>
<dbReference type="PROSITE" id="PS00168">
    <property type="entry name" value="TRP_SYNTHASE_BETA"/>
    <property type="match status" value="1"/>
</dbReference>
<keyword id="KW-0028">Amino-acid biosynthesis</keyword>
<keyword id="KW-0057">Aromatic amino acid biosynthesis</keyword>
<keyword id="KW-0456">Lyase</keyword>
<keyword id="KW-0663">Pyridoxal phosphate</keyword>
<keyword id="KW-1185">Reference proteome</keyword>
<keyword id="KW-0822">Tryptophan biosynthesis</keyword>
<accession>Q92TC9</accession>
<sequence>MNQPPKPNSFRSGPDEEGRFGIFGGRFVAETLMPLILDLQDEWARAKNDPAFKAELENLGTHYIGRPSPLYFAERLTAELGGAKIYFKREELNHTGSHKINNCIGQILLAKRMGKTRIIAETGAGQHGVASATVAARFGLPCVVYMGATDVERQAPNVFRMKLLGAEVKPVTAGNGTLKDAMNEALRDWVTNVDSTYYLIGTAAGPHPYPEMVRDFQAVIGEEAKQQILEAEGRLPDLVVAAVGGGSNAIGIFHSFLDDEGVRIVGVEAGGKGLDGDEHCASLTAGSPGVLHGNRTYLLQDGDGQIKEGHSISAGLDYPGIGPEHAWLNDIGRVEYVPIMDHEALEAFQTLTRLEGIIPALEPSHALAEVIKRAPKMGKDEIILMNLSGRGDKDIFTVGKILGMGQ</sequence>
<organism>
    <name type="scientific">Rhizobium meliloti (strain 1021)</name>
    <name type="common">Ensifer meliloti</name>
    <name type="synonym">Sinorhizobium meliloti</name>
    <dbReference type="NCBI Taxonomy" id="266834"/>
    <lineage>
        <taxon>Bacteria</taxon>
        <taxon>Pseudomonadati</taxon>
        <taxon>Pseudomonadota</taxon>
        <taxon>Alphaproteobacteria</taxon>
        <taxon>Hyphomicrobiales</taxon>
        <taxon>Rhizobiaceae</taxon>
        <taxon>Sinorhizobium/Ensifer group</taxon>
        <taxon>Sinorhizobium</taxon>
    </lineage>
</organism>
<proteinExistence type="inferred from homology"/>
<evidence type="ECO:0000255" key="1">
    <source>
        <dbReference type="HAMAP-Rule" id="MF_00133"/>
    </source>
</evidence>
<gene>
    <name evidence="1" type="primary">trpB</name>
    <name type="ordered locus">R00028</name>
    <name type="ORF">SMc02766</name>
</gene>